<dbReference type="EMBL" id="Z27247">
    <property type="protein sequence ID" value="CAA81760.1"/>
    <property type="molecule type" value="mRNA"/>
</dbReference>
<dbReference type="EMBL" id="AY224631">
    <property type="protein sequence ID" value="AAO72490.1"/>
    <property type="molecule type" value="Genomic_DNA"/>
</dbReference>
<dbReference type="EMBL" id="AY224632">
    <property type="protein sequence ID" value="AAO72491.1"/>
    <property type="molecule type" value="Genomic_DNA"/>
</dbReference>
<dbReference type="EMBL" id="AY224633">
    <property type="protein sequence ID" value="AAO72492.1"/>
    <property type="molecule type" value="Genomic_DNA"/>
</dbReference>
<dbReference type="EMBL" id="AY224634">
    <property type="protein sequence ID" value="AAO72493.1"/>
    <property type="molecule type" value="Genomic_DNA"/>
</dbReference>
<dbReference type="EMBL" id="AY224635">
    <property type="protein sequence ID" value="AAO72494.1"/>
    <property type="molecule type" value="Genomic_DNA"/>
</dbReference>
<dbReference type="EMBL" id="AY224636">
    <property type="protein sequence ID" value="AAO72495.1"/>
    <property type="molecule type" value="Genomic_DNA"/>
</dbReference>
<dbReference type="EMBL" id="AY224637">
    <property type="protein sequence ID" value="AAO72496.1"/>
    <property type="molecule type" value="Genomic_DNA"/>
</dbReference>
<dbReference type="EMBL" id="AY224638">
    <property type="protein sequence ID" value="AAO72497.1"/>
    <property type="molecule type" value="Genomic_DNA"/>
</dbReference>
<dbReference type="EMBL" id="AY224639">
    <property type="protein sequence ID" value="AAO72498.1"/>
    <property type="molecule type" value="Genomic_DNA"/>
</dbReference>
<dbReference type="EMBL" id="AY224640">
    <property type="protein sequence ID" value="AAO72499.1"/>
    <property type="molecule type" value="Genomic_DNA"/>
</dbReference>
<dbReference type="EMBL" id="AY224641">
    <property type="protein sequence ID" value="AAO72500.1"/>
    <property type="molecule type" value="Genomic_DNA"/>
</dbReference>
<dbReference type="EMBL" id="AY224642">
    <property type="protein sequence ID" value="AAO72501.1"/>
    <property type="molecule type" value="Genomic_DNA"/>
</dbReference>
<dbReference type="EMBL" id="AE013599">
    <property type="protein sequence ID" value="AAF58855.1"/>
    <property type="molecule type" value="Genomic_DNA"/>
</dbReference>
<dbReference type="EMBL" id="BT023384">
    <property type="protein sequence ID" value="AAY55800.1"/>
    <property type="molecule type" value="mRNA"/>
</dbReference>
<dbReference type="PIR" id="S43228">
    <property type="entry name" value="S43228"/>
</dbReference>
<dbReference type="RefSeq" id="NP_523672.1">
    <property type="nucleotide sequence ID" value="NM_078948.3"/>
</dbReference>
<dbReference type="BioGRID" id="61875">
    <property type="interactions" value="8"/>
</dbReference>
<dbReference type="FunCoup" id="P36192">
    <property type="interactions" value="94"/>
</dbReference>
<dbReference type="IntAct" id="P36192">
    <property type="interactions" value="6"/>
</dbReference>
<dbReference type="STRING" id="7227.FBpp0087518"/>
<dbReference type="TCDB" id="1.C.47.1.1">
    <property type="family name" value="the insect/fungal defensin (insect/fungal defensin) family"/>
</dbReference>
<dbReference type="PaxDb" id="7227-FBpp0087518"/>
<dbReference type="DNASU" id="36047"/>
<dbReference type="EnsemblMetazoa" id="FBtr0088432">
    <property type="protein sequence ID" value="FBpp0087518"/>
    <property type="gene ID" value="FBgn0010385"/>
</dbReference>
<dbReference type="GeneID" id="36047"/>
<dbReference type="KEGG" id="dme:Dmel_CG1385"/>
<dbReference type="UCSC" id="CG1385-RA">
    <property type="organism name" value="d. melanogaster"/>
</dbReference>
<dbReference type="AGR" id="FB:FBgn0010385"/>
<dbReference type="CTD" id="36047"/>
<dbReference type="FlyBase" id="FBgn0010385">
    <property type="gene designation" value="Def"/>
</dbReference>
<dbReference type="VEuPathDB" id="VectorBase:FBgn0010385"/>
<dbReference type="eggNOG" id="ENOG502SD3P">
    <property type="taxonomic scope" value="Eukaryota"/>
</dbReference>
<dbReference type="HOGENOM" id="CLU_174272_0_0_1"/>
<dbReference type="InParanoid" id="P36192"/>
<dbReference type="OMA" id="CAVHCIG"/>
<dbReference type="OrthoDB" id="10038290at2759"/>
<dbReference type="PhylomeDB" id="P36192"/>
<dbReference type="BioGRID-ORCS" id="36047">
    <property type="hits" value="0 hits in 1 CRISPR screen"/>
</dbReference>
<dbReference type="GenomeRNAi" id="36047"/>
<dbReference type="PRO" id="PR:P36192"/>
<dbReference type="Proteomes" id="UP000000803">
    <property type="component" value="Chromosome 2R"/>
</dbReference>
<dbReference type="Bgee" id="FBgn0010385">
    <property type="expression patterns" value="Expressed in oviduct (Drosophila) and 51 other cell types or tissues"/>
</dbReference>
<dbReference type="ExpressionAtlas" id="P36192">
    <property type="expression patterns" value="baseline and differential"/>
</dbReference>
<dbReference type="GO" id="GO:0005615">
    <property type="term" value="C:extracellular space"/>
    <property type="evidence" value="ECO:0000314"/>
    <property type="project" value="FlyBase"/>
</dbReference>
<dbReference type="GO" id="GO:0019731">
    <property type="term" value="P:antibacterial humoral response"/>
    <property type="evidence" value="ECO:0000270"/>
    <property type="project" value="FlyBase"/>
</dbReference>
<dbReference type="GO" id="GO:0042742">
    <property type="term" value="P:defense response to bacterium"/>
    <property type="evidence" value="ECO:0000318"/>
    <property type="project" value="GO_Central"/>
</dbReference>
<dbReference type="GO" id="GO:0050830">
    <property type="term" value="P:defense response to Gram-positive bacterium"/>
    <property type="evidence" value="ECO:0000314"/>
    <property type="project" value="FlyBase"/>
</dbReference>
<dbReference type="GO" id="GO:0006959">
    <property type="term" value="P:humoral immune response"/>
    <property type="evidence" value="ECO:0000270"/>
    <property type="project" value="FlyBase"/>
</dbReference>
<dbReference type="GO" id="GO:0045087">
    <property type="term" value="P:innate immune response"/>
    <property type="evidence" value="ECO:0007669"/>
    <property type="project" value="UniProtKB-KW"/>
</dbReference>
<dbReference type="GO" id="GO:0009617">
    <property type="term" value="P:response to bacterium"/>
    <property type="evidence" value="ECO:0000314"/>
    <property type="project" value="FlyBase"/>
</dbReference>
<dbReference type="CDD" id="cd21806">
    <property type="entry name" value="DEFL_defensin-like"/>
    <property type="match status" value="1"/>
</dbReference>
<dbReference type="FunFam" id="3.30.30.10:FF:000005">
    <property type="entry name" value="Defensin"/>
    <property type="match status" value="1"/>
</dbReference>
<dbReference type="Gene3D" id="3.30.30.10">
    <property type="entry name" value="Knottin, scorpion toxin-like"/>
    <property type="match status" value="1"/>
</dbReference>
<dbReference type="InterPro" id="IPR001542">
    <property type="entry name" value="Defensin_invertebrate/fungal"/>
</dbReference>
<dbReference type="InterPro" id="IPR036574">
    <property type="entry name" value="Scorpion_toxin-like_sf"/>
</dbReference>
<dbReference type="PANTHER" id="PTHR13645">
    <property type="entry name" value="DEFENSIN"/>
    <property type="match status" value="1"/>
</dbReference>
<dbReference type="PANTHER" id="PTHR13645:SF0">
    <property type="entry name" value="DEFENSIN"/>
    <property type="match status" value="1"/>
</dbReference>
<dbReference type="Pfam" id="PF01097">
    <property type="entry name" value="Defensin_2"/>
    <property type="match status" value="1"/>
</dbReference>
<dbReference type="SUPFAM" id="SSF57095">
    <property type="entry name" value="Scorpion toxin-like"/>
    <property type="match status" value="1"/>
</dbReference>
<dbReference type="PROSITE" id="PS51378">
    <property type="entry name" value="INVERT_DEFENSINS"/>
    <property type="match status" value="1"/>
</dbReference>
<gene>
    <name type="primary">Def</name>
    <name type="ORF">CG1385</name>
</gene>
<organism>
    <name type="scientific">Drosophila melanogaster</name>
    <name type="common">Fruit fly</name>
    <dbReference type="NCBI Taxonomy" id="7227"/>
    <lineage>
        <taxon>Eukaryota</taxon>
        <taxon>Metazoa</taxon>
        <taxon>Ecdysozoa</taxon>
        <taxon>Arthropoda</taxon>
        <taxon>Hexapoda</taxon>
        <taxon>Insecta</taxon>
        <taxon>Pterygota</taxon>
        <taxon>Neoptera</taxon>
        <taxon>Endopterygota</taxon>
        <taxon>Diptera</taxon>
        <taxon>Brachycera</taxon>
        <taxon>Muscomorpha</taxon>
        <taxon>Ephydroidea</taxon>
        <taxon>Drosophilidae</taxon>
        <taxon>Drosophila</taxon>
        <taxon>Sophophora</taxon>
    </lineage>
</organism>
<sequence length="92" mass="10190">MKFFVLVAIAFALLACVAQAQPVSDVDPIPEDHVLVHEDAHQEVLQHSRQKRATCDLLSKWNWNHTACAGHCIAKGFKGGYCNDKAVCVCRN</sequence>
<comment type="function">
    <text evidence="4">Responsible for the anti Gram-positive activity of immune hemolymph. Expressed in the absence of immune challenge during metamorphosis.</text>
</comment>
<comment type="subcellular location">
    <subcellularLocation>
        <location evidence="2 3 4">Secreted</location>
    </subcellularLocation>
</comment>
<comment type="tissue specificity">
    <text evidence="3">Hemolymph (at protein level).</text>
</comment>
<comment type="induction">
    <text evidence="3">By bacterial infection (at protein level).</text>
</comment>
<comment type="similarity">
    <text evidence="2">Belongs to the invertebrate defensin family. Type 1 subfamily.</text>
</comment>
<name>DEFI_DROME</name>
<proteinExistence type="evidence at protein level"/>
<feature type="signal peptide" evidence="1">
    <location>
        <begin position="1"/>
        <end position="20"/>
    </location>
</feature>
<feature type="propeptide" id="PRO_0000006742">
    <location>
        <begin position="21"/>
        <end position="52"/>
    </location>
</feature>
<feature type="chain" id="PRO_0000006743" description="Defensin">
    <location>
        <begin position="53"/>
        <end position="92"/>
    </location>
</feature>
<feature type="disulfide bond" evidence="2">
    <location>
        <begin position="55"/>
        <end position="82"/>
    </location>
</feature>
<feature type="disulfide bond" evidence="2">
    <location>
        <begin position="68"/>
        <end position="88"/>
    </location>
</feature>
<feature type="disulfide bond" evidence="2">
    <location>
        <begin position="72"/>
        <end position="90"/>
    </location>
</feature>
<feature type="sequence variant" description="In strain: 2CPA7 and 2CPA14.">
    <original>L</original>
    <variation>P</variation>
    <location>
        <position position="6"/>
    </location>
</feature>
<feature type="sequence variant" description="In strain: 2CPA12, 2CPA43, 2CPA46, 2CPA51, 2CPA103 and 2CPA105.">
    <original>A</original>
    <variation>T</variation>
    <location>
        <position position="15"/>
    </location>
</feature>
<feature type="sequence variant" description="In strain: 2CPA1, 2CPA12, 2CPA43, 2CPA46, 2CPA51, 2CPA103 and 2CPA105.">
    <original>V</original>
    <variation>M</variation>
    <location>
        <position position="17"/>
    </location>
</feature>
<feature type="sequence variant" description="In strain: 2CPA7 and 2CPA14.">
    <original>E</original>
    <variation>D</variation>
    <location>
        <position position="38"/>
    </location>
</feature>
<keyword id="KW-0044">Antibiotic</keyword>
<keyword id="KW-0929">Antimicrobial</keyword>
<keyword id="KW-0165">Cleavage on pair of basic residues</keyword>
<keyword id="KW-0211">Defensin</keyword>
<keyword id="KW-1015">Disulfide bond</keyword>
<keyword id="KW-0391">Immunity</keyword>
<keyword id="KW-0399">Innate immunity</keyword>
<keyword id="KW-1185">Reference proteome</keyword>
<keyword id="KW-0964">Secreted</keyword>
<keyword id="KW-0732">Signal</keyword>
<accession>P36192</accession>
<accession>Q4V3H2</accession>
<accession>Q867E6</accession>
<accession>Q867G6</accession>
<accession>Q86BV6</accession>
<accession>Q86BV7</accession>
<accession>Q9V5F5</accession>
<evidence type="ECO:0000255" key="1"/>
<evidence type="ECO:0000255" key="2">
    <source>
        <dbReference type="PROSITE-ProRule" id="PRU00710"/>
    </source>
</evidence>
<evidence type="ECO:0000269" key="3">
    <source>
    </source>
</evidence>
<evidence type="ECO:0000269" key="4">
    <source>
    </source>
</evidence>
<evidence type="ECO:0000303" key="5">
    <source>
    </source>
</evidence>
<protein>
    <recommendedName>
        <fullName>Defensin</fullName>
    </recommendedName>
</protein>
<reference key="1">
    <citation type="journal article" date="1994" name="Eur. J. Biochem.">
        <title>Characterization and transcriptional profiles of a Drosophila gene encoding an insect defensin. A study in insect immunity.</title>
        <authorList>
            <person name="Dimarcq J.-L."/>
            <person name="Hoffmann D."/>
            <person name="Meister M."/>
            <person name="Bulet P."/>
            <person name="Lanot R."/>
            <person name="Reichhart J.-M."/>
            <person name="Hoffmann J.A."/>
        </authorList>
    </citation>
    <scope>NUCLEOTIDE SEQUENCE [MRNA]</scope>
    <scope>FUNCTION</scope>
    <scope>SUBCELLULAR LOCATION</scope>
    <source>
        <strain>Oregon-R</strain>
    </source>
</reference>
<reference key="2">
    <citation type="journal article" date="2003" name="Mol. Biol. Evol.">
        <title>Molecular population genetics of inducible antibacterial peptide genes in Drosophila melanogaster.</title>
        <authorList>
            <person name="Lazzaro B.P."/>
            <person name="Clark A.G."/>
        </authorList>
    </citation>
    <scope>NUCLEOTIDE SEQUENCE [GENOMIC DNA]</scope>
    <source>
        <strain>2CPA1</strain>
        <strain>2CPA103</strain>
        <strain>2CPA105</strain>
        <strain>2CPA118</strain>
        <strain>2CPA12</strain>
        <strain>2CPA122</strain>
        <strain>2CPA129</strain>
        <strain>2CPA14</strain>
        <strain>2CPA43</strain>
        <strain>2CPA46</strain>
        <strain>2CPA51</strain>
        <strain>2CPA7</strain>
    </source>
</reference>
<reference key="3">
    <citation type="journal article" date="2000" name="Science">
        <title>The genome sequence of Drosophila melanogaster.</title>
        <authorList>
            <person name="Adams M.D."/>
            <person name="Celniker S.E."/>
            <person name="Holt R.A."/>
            <person name="Evans C.A."/>
            <person name="Gocayne J.D."/>
            <person name="Amanatides P.G."/>
            <person name="Scherer S.E."/>
            <person name="Li P.W."/>
            <person name="Hoskins R.A."/>
            <person name="Galle R.F."/>
            <person name="George R.A."/>
            <person name="Lewis S.E."/>
            <person name="Richards S."/>
            <person name="Ashburner M."/>
            <person name="Henderson S.N."/>
            <person name="Sutton G.G."/>
            <person name="Wortman J.R."/>
            <person name="Yandell M.D."/>
            <person name="Zhang Q."/>
            <person name="Chen L.X."/>
            <person name="Brandon R.C."/>
            <person name="Rogers Y.-H.C."/>
            <person name="Blazej R.G."/>
            <person name="Champe M."/>
            <person name="Pfeiffer B.D."/>
            <person name="Wan K.H."/>
            <person name="Doyle C."/>
            <person name="Baxter E.G."/>
            <person name="Helt G."/>
            <person name="Nelson C.R."/>
            <person name="Miklos G.L.G."/>
            <person name="Abril J.F."/>
            <person name="Agbayani A."/>
            <person name="An H.-J."/>
            <person name="Andrews-Pfannkoch C."/>
            <person name="Baldwin D."/>
            <person name="Ballew R.M."/>
            <person name="Basu A."/>
            <person name="Baxendale J."/>
            <person name="Bayraktaroglu L."/>
            <person name="Beasley E.M."/>
            <person name="Beeson K.Y."/>
            <person name="Benos P.V."/>
            <person name="Berman B.P."/>
            <person name="Bhandari D."/>
            <person name="Bolshakov S."/>
            <person name="Borkova D."/>
            <person name="Botchan M.R."/>
            <person name="Bouck J."/>
            <person name="Brokstein P."/>
            <person name="Brottier P."/>
            <person name="Burtis K.C."/>
            <person name="Busam D.A."/>
            <person name="Butler H."/>
            <person name="Cadieu E."/>
            <person name="Center A."/>
            <person name="Chandra I."/>
            <person name="Cherry J.M."/>
            <person name="Cawley S."/>
            <person name="Dahlke C."/>
            <person name="Davenport L.B."/>
            <person name="Davies P."/>
            <person name="de Pablos B."/>
            <person name="Delcher A."/>
            <person name="Deng Z."/>
            <person name="Mays A.D."/>
            <person name="Dew I."/>
            <person name="Dietz S.M."/>
            <person name="Dodson K."/>
            <person name="Doup L.E."/>
            <person name="Downes M."/>
            <person name="Dugan-Rocha S."/>
            <person name="Dunkov B.C."/>
            <person name="Dunn P."/>
            <person name="Durbin K.J."/>
            <person name="Evangelista C.C."/>
            <person name="Ferraz C."/>
            <person name="Ferriera S."/>
            <person name="Fleischmann W."/>
            <person name="Fosler C."/>
            <person name="Gabrielian A.E."/>
            <person name="Garg N.S."/>
            <person name="Gelbart W.M."/>
            <person name="Glasser K."/>
            <person name="Glodek A."/>
            <person name="Gong F."/>
            <person name="Gorrell J.H."/>
            <person name="Gu Z."/>
            <person name="Guan P."/>
            <person name="Harris M."/>
            <person name="Harris N.L."/>
            <person name="Harvey D.A."/>
            <person name="Heiman T.J."/>
            <person name="Hernandez J.R."/>
            <person name="Houck J."/>
            <person name="Hostin D."/>
            <person name="Houston K.A."/>
            <person name="Howland T.J."/>
            <person name="Wei M.-H."/>
            <person name="Ibegwam C."/>
            <person name="Jalali M."/>
            <person name="Kalush F."/>
            <person name="Karpen G.H."/>
            <person name="Ke Z."/>
            <person name="Kennison J.A."/>
            <person name="Ketchum K.A."/>
            <person name="Kimmel B.E."/>
            <person name="Kodira C.D."/>
            <person name="Kraft C.L."/>
            <person name="Kravitz S."/>
            <person name="Kulp D."/>
            <person name="Lai Z."/>
            <person name="Lasko P."/>
            <person name="Lei Y."/>
            <person name="Levitsky A.A."/>
            <person name="Li J.H."/>
            <person name="Li Z."/>
            <person name="Liang Y."/>
            <person name="Lin X."/>
            <person name="Liu X."/>
            <person name="Mattei B."/>
            <person name="McIntosh T.C."/>
            <person name="McLeod M.P."/>
            <person name="McPherson D."/>
            <person name="Merkulov G."/>
            <person name="Milshina N.V."/>
            <person name="Mobarry C."/>
            <person name="Morris J."/>
            <person name="Moshrefi A."/>
            <person name="Mount S.M."/>
            <person name="Moy M."/>
            <person name="Murphy B."/>
            <person name="Murphy L."/>
            <person name="Muzny D.M."/>
            <person name="Nelson D.L."/>
            <person name="Nelson D.R."/>
            <person name="Nelson K.A."/>
            <person name="Nixon K."/>
            <person name="Nusskern D.R."/>
            <person name="Pacleb J.M."/>
            <person name="Palazzolo M."/>
            <person name="Pittman G.S."/>
            <person name="Pan S."/>
            <person name="Pollard J."/>
            <person name="Puri V."/>
            <person name="Reese M.G."/>
            <person name="Reinert K."/>
            <person name="Remington K."/>
            <person name="Saunders R.D.C."/>
            <person name="Scheeler F."/>
            <person name="Shen H."/>
            <person name="Shue B.C."/>
            <person name="Siden-Kiamos I."/>
            <person name="Simpson M."/>
            <person name="Skupski M.P."/>
            <person name="Smith T.J."/>
            <person name="Spier E."/>
            <person name="Spradling A.C."/>
            <person name="Stapleton M."/>
            <person name="Strong R."/>
            <person name="Sun E."/>
            <person name="Svirskas R."/>
            <person name="Tector C."/>
            <person name="Turner R."/>
            <person name="Venter E."/>
            <person name="Wang A.H."/>
            <person name="Wang X."/>
            <person name="Wang Z.-Y."/>
            <person name="Wassarman D.A."/>
            <person name="Weinstock G.M."/>
            <person name="Weissenbach J."/>
            <person name="Williams S.M."/>
            <person name="Woodage T."/>
            <person name="Worley K.C."/>
            <person name="Wu D."/>
            <person name="Yang S."/>
            <person name="Yao Q.A."/>
            <person name="Ye J."/>
            <person name="Yeh R.-F."/>
            <person name="Zaveri J.S."/>
            <person name="Zhan M."/>
            <person name="Zhang G."/>
            <person name="Zhao Q."/>
            <person name="Zheng L."/>
            <person name="Zheng X.H."/>
            <person name="Zhong F.N."/>
            <person name="Zhong W."/>
            <person name="Zhou X."/>
            <person name="Zhu S.C."/>
            <person name="Zhu X."/>
            <person name="Smith H.O."/>
            <person name="Gibbs R.A."/>
            <person name="Myers E.W."/>
            <person name="Rubin G.M."/>
            <person name="Venter J.C."/>
        </authorList>
    </citation>
    <scope>NUCLEOTIDE SEQUENCE [LARGE SCALE GENOMIC DNA]</scope>
    <source>
        <strain>Berkeley</strain>
    </source>
</reference>
<reference key="4">
    <citation type="journal article" date="2002" name="Genome Biol.">
        <title>Annotation of the Drosophila melanogaster euchromatic genome: a systematic review.</title>
        <authorList>
            <person name="Misra S."/>
            <person name="Crosby M.A."/>
            <person name="Mungall C.J."/>
            <person name="Matthews B.B."/>
            <person name="Campbell K.S."/>
            <person name="Hradecky P."/>
            <person name="Huang Y."/>
            <person name="Kaminker J.S."/>
            <person name="Millburn G.H."/>
            <person name="Prochnik S.E."/>
            <person name="Smith C.D."/>
            <person name="Tupy J.L."/>
            <person name="Whitfield E.J."/>
            <person name="Bayraktaroglu L."/>
            <person name="Berman B.P."/>
            <person name="Bettencourt B.R."/>
            <person name="Celniker S.E."/>
            <person name="de Grey A.D.N.J."/>
            <person name="Drysdale R.A."/>
            <person name="Harris N.L."/>
            <person name="Richter J."/>
            <person name="Russo S."/>
            <person name="Schroeder A.J."/>
            <person name="Shu S.Q."/>
            <person name="Stapleton M."/>
            <person name="Yamada C."/>
            <person name="Ashburner M."/>
            <person name="Gelbart W.M."/>
            <person name="Rubin G.M."/>
            <person name="Lewis S.E."/>
        </authorList>
    </citation>
    <scope>GENOME REANNOTATION</scope>
    <source>
        <strain>Berkeley</strain>
    </source>
</reference>
<reference key="5">
    <citation type="submission" date="2005-05" db="EMBL/GenBank/DDBJ databases">
        <authorList>
            <person name="Stapleton M."/>
            <person name="Carlson J.W."/>
            <person name="Chavez C."/>
            <person name="Frise E."/>
            <person name="George R.A."/>
            <person name="Pacleb J.M."/>
            <person name="Pak S."/>
            <person name="Wan K.H."/>
            <person name="Yu C."/>
            <person name="Celniker S.E."/>
        </authorList>
    </citation>
    <scope>NUCLEOTIDE SEQUENCE [LARGE SCALE MRNA]</scope>
    <source>
        <strain>Berkeley</strain>
    </source>
</reference>
<reference key="6">
    <citation type="journal article" date="2006" name="J. Insect Physiol.">
        <title>Identification of new immune induced molecules in the haemolymph of Drosophila melanogaster by 2D-nanoLC MS/MS.</title>
        <authorList>
            <person name="Verleyen P."/>
            <person name="Baggerman G."/>
            <person name="D'Hertog W."/>
            <person name="Vierstraete E."/>
            <person name="Husson S.J."/>
            <person name="Schoofs L."/>
        </authorList>
    </citation>
    <scope>SUBCELLULAR LOCATION</scope>
    <scope>TISSUE SPECIFICITY</scope>
    <scope>INDUCTION BY BACTERIA</scope>
    <scope>IDENTIFICATION BY MASS SPECTROMETRY</scope>
    <source>
        <tissue evidence="5">Hemolymph</tissue>
    </source>
</reference>